<organism>
    <name type="scientific">Koribacter versatilis (strain Ellin345)</name>
    <dbReference type="NCBI Taxonomy" id="204669"/>
    <lineage>
        <taxon>Bacteria</taxon>
        <taxon>Pseudomonadati</taxon>
        <taxon>Acidobacteriota</taxon>
        <taxon>Terriglobia</taxon>
        <taxon>Terriglobales</taxon>
        <taxon>Candidatus Korobacteraceae</taxon>
        <taxon>Candidatus Korobacter</taxon>
    </lineage>
</organism>
<sequence>MGSIALFLLVALIKVVLVIFVLLTAVAYTVWLERKVVGRMQNRWGPTRVGPFGLLQPLADGLKFILKEDLLPPHVNKPLYILAPMLAVAMALLSISIVPFGGTLTIGHITTPLQITGIMGANGQPVDINIGLLIILGVTSIGVYGIALAGWSSNSKYSLLGSLRASAQMVSYEVSLGLSLVGVLLLSGSFSLREIVRLQQGGFWNWNIFGGFQFIAFFIYLTSAYAETNRIPFDLPEAETELVAGYHTEYSSMKFAMFFMAEYANMVTVACIASILFLGGWSGPVPGFLPPILQSLVPVFWFCLRIFAFLFIYIWVRGTLPRFRYDQLMAFSWKFLLPLSIANIMVTALFVALK</sequence>
<gene>
    <name evidence="1" type="primary">nuoH2</name>
    <name type="ordered locus">Acid345_1308</name>
</gene>
<proteinExistence type="inferred from homology"/>
<reference key="1">
    <citation type="journal article" date="2009" name="Appl. Environ. Microbiol.">
        <title>Three genomes from the phylum Acidobacteria provide insight into the lifestyles of these microorganisms in soils.</title>
        <authorList>
            <person name="Ward N.L."/>
            <person name="Challacombe J.F."/>
            <person name="Janssen P.H."/>
            <person name="Henrissat B."/>
            <person name="Coutinho P.M."/>
            <person name="Wu M."/>
            <person name="Xie G."/>
            <person name="Haft D.H."/>
            <person name="Sait M."/>
            <person name="Badger J."/>
            <person name="Barabote R.D."/>
            <person name="Bradley B."/>
            <person name="Brettin T.S."/>
            <person name="Brinkac L.M."/>
            <person name="Bruce D."/>
            <person name="Creasy T."/>
            <person name="Daugherty S.C."/>
            <person name="Davidsen T.M."/>
            <person name="DeBoy R.T."/>
            <person name="Detter J.C."/>
            <person name="Dodson R.J."/>
            <person name="Durkin A.S."/>
            <person name="Ganapathy A."/>
            <person name="Gwinn-Giglio M."/>
            <person name="Han C.S."/>
            <person name="Khouri H."/>
            <person name="Kiss H."/>
            <person name="Kothari S.P."/>
            <person name="Madupu R."/>
            <person name="Nelson K.E."/>
            <person name="Nelson W.C."/>
            <person name="Paulsen I."/>
            <person name="Penn K."/>
            <person name="Ren Q."/>
            <person name="Rosovitz M.J."/>
            <person name="Selengut J.D."/>
            <person name="Shrivastava S."/>
            <person name="Sullivan S.A."/>
            <person name="Tapia R."/>
            <person name="Thompson L.S."/>
            <person name="Watkins K.L."/>
            <person name="Yang Q."/>
            <person name="Yu C."/>
            <person name="Zafar N."/>
            <person name="Zhou L."/>
            <person name="Kuske C.R."/>
        </authorList>
    </citation>
    <scope>NUCLEOTIDE SEQUENCE [LARGE SCALE GENOMIC DNA]</scope>
    <source>
        <strain>Ellin345</strain>
    </source>
</reference>
<dbReference type="EC" id="7.1.1.-" evidence="1"/>
<dbReference type="EMBL" id="CP000360">
    <property type="protein sequence ID" value="ABF40310.1"/>
    <property type="molecule type" value="Genomic_DNA"/>
</dbReference>
<dbReference type="RefSeq" id="WP_011522112.1">
    <property type="nucleotide sequence ID" value="NC_008009.1"/>
</dbReference>
<dbReference type="SMR" id="Q1IS40"/>
<dbReference type="STRING" id="204669.Acid345_1308"/>
<dbReference type="EnsemblBacteria" id="ABF40310">
    <property type="protein sequence ID" value="ABF40310"/>
    <property type="gene ID" value="Acid345_1308"/>
</dbReference>
<dbReference type="KEGG" id="aba:Acid345_1308"/>
<dbReference type="eggNOG" id="COG1005">
    <property type="taxonomic scope" value="Bacteria"/>
</dbReference>
<dbReference type="HOGENOM" id="CLU_015134_0_1_0"/>
<dbReference type="OrthoDB" id="9803734at2"/>
<dbReference type="Proteomes" id="UP000002432">
    <property type="component" value="Chromosome"/>
</dbReference>
<dbReference type="GO" id="GO:0005886">
    <property type="term" value="C:plasma membrane"/>
    <property type="evidence" value="ECO:0007669"/>
    <property type="project" value="UniProtKB-SubCell"/>
</dbReference>
<dbReference type="GO" id="GO:0003954">
    <property type="term" value="F:NADH dehydrogenase activity"/>
    <property type="evidence" value="ECO:0007669"/>
    <property type="project" value="TreeGrafter"/>
</dbReference>
<dbReference type="GO" id="GO:0016655">
    <property type="term" value="F:oxidoreductase activity, acting on NAD(P)H, quinone or similar compound as acceptor"/>
    <property type="evidence" value="ECO:0007669"/>
    <property type="project" value="UniProtKB-UniRule"/>
</dbReference>
<dbReference type="GO" id="GO:0048038">
    <property type="term" value="F:quinone binding"/>
    <property type="evidence" value="ECO:0007669"/>
    <property type="project" value="UniProtKB-KW"/>
</dbReference>
<dbReference type="GO" id="GO:0009060">
    <property type="term" value="P:aerobic respiration"/>
    <property type="evidence" value="ECO:0007669"/>
    <property type="project" value="TreeGrafter"/>
</dbReference>
<dbReference type="HAMAP" id="MF_01350">
    <property type="entry name" value="NDH1_NuoH"/>
    <property type="match status" value="1"/>
</dbReference>
<dbReference type="InterPro" id="IPR001694">
    <property type="entry name" value="NADH_UbQ_OxRdtase_su1/FPO"/>
</dbReference>
<dbReference type="InterPro" id="IPR018086">
    <property type="entry name" value="NADH_UbQ_OxRdtase_su1_CS"/>
</dbReference>
<dbReference type="NCBIfam" id="NF004741">
    <property type="entry name" value="PRK06076.1-2"/>
    <property type="match status" value="1"/>
</dbReference>
<dbReference type="PANTHER" id="PTHR11432">
    <property type="entry name" value="NADH DEHYDROGENASE SUBUNIT 1"/>
    <property type="match status" value="1"/>
</dbReference>
<dbReference type="PANTHER" id="PTHR11432:SF3">
    <property type="entry name" value="NADH-UBIQUINONE OXIDOREDUCTASE CHAIN 1"/>
    <property type="match status" value="1"/>
</dbReference>
<dbReference type="Pfam" id="PF00146">
    <property type="entry name" value="NADHdh"/>
    <property type="match status" value="1"/>
</dbReference>
<dbReference type="PROSITE" id="PS00668">
    <property type="entry name" value="COMPLEX1_ND1_2"/>
    <property type="match status" value="1"/>
</dbReference>
<feature type="chain" id="PRO_5000121137" description="NADH-quinone oxidoreductase subunit H 2">
    <location>
        <begin position="1"/>
        <end position="354"/>
    </location>
</feature>
<feature type="transmembrane region" description="Helical" evidence="1">
    <location>
        <begin position="4"/>
        <end position="24"/>
    </location>
</feature>
<feature type="transmembrane region" description="Helical" evidence="1">
    <location>
        <begin position="81"/>
        <end position="101"/>
    </location>
</feature>
<feature type="transmembrane region" description="Helical" evidence="1">
    <location>
        <begin position="130"/>
        <end position="150"/>
    </location>
</feature>
<feature type="transmembrane region" description="Helical" evidence="1">
    <location>
        <begin position="170"/>
        <end position="190"/>
    </location>
</feature>
<feature type="transmembrane region" description="Helical" evidence="1">
    <location>
        <begin position="201"/>
        <end position="221"/>
    </location>
</feature>
<feature type="transmembrane region" description="Helical" evidence="1">
    <location>
        <begin position="269"/>
        <end position="289"/>
    </location>
</feature>
<feature type="transmembrane region" description="Helical" evidence="1">
    <location>
        <begin position="296"/>
        <end position="316"/>
    </location>
</feature>
<feature type="transmembrane region" description="Helical" evidence="1">
    <location>
        <begin position="333"/>
        <end position="353"/>
    </location>
</feature>
<evidence type="ECO:0000255" key="1">
    <source>
        <dbReference type="HAMAP-Rule" id="MF_01350"/>
    </source>
</evidence>
<accession>Q1IS40</accession>
<comment type="function">
    <text evidence="1">NDH-1 shuttles electrons from NADH, via FMN and iron-sulfur (Fe-S) centers, to quinones in the respiratory chain. The immediate electron acceptor for the enzyme in this species is believed to be ubiquinone. Couples the redox reaction to proton translocation (for every two electrons transferred, four hydrogen ions are translocated across the cytoplasmic membrane), and thus conserves the redox energy in a proton gradient. This subunit may bind ubiquinone.</text>
</comment>
<comment type="catalytic activity">
    <reaction evidence="1">
        <text>a quinone + NADH + 5 H(+)(in) = a quinol + NAD(+) + 4 H(+)(out)</text>
        <dbReference type="Rhea" id="RHEA:57888"/>
        <dbReference type="ChEBI" id="CHEBI:15378"/>
        <dbReference type="ChEBI" id="CHEBI:24646"/>
        <dbReference type="ChEBI" id="CHEBI:57540"/>
        <dbReference type="ChEBI" id="CHEBI:57945"/>
        <dbReference type="ChEBI" id="CHEBI:132124"/>
    </reaction>
</comment>
<comment type="subunit">
    <text evidence="1">NDH-1 is composed of 14 different subunits. Subunits NuoA, H, J, K, L, M, N constitute the membrane sector of the complex.</text>
</comment>
<comment type="subcellular location">
    <subcellularLocation>
        <location evidence="1">Cell inner membrane</location>
        <topology evidence="1">Multi-pass membrane protein</topology>
    </subcellularLocation>
</comment>
<comment type="similarity">
    <text evidence="1">Belongs to the complex I subunit 1 family.</text>
</comment>
<keyword id="KW-0997">Cell inner membrane</keyword>
<keyword id="KW-1003">Cell membrane</keyword>
<keyword id="KW-0472">Membrane</keyword>
<keyword id="KW-0520">NAD</keyword>
<keyword id="KW-0874">Quinone</keyword>
<keyword id="KW-1185">Reference proteome</keyword>
<keyword id="KW-1278">Translocase</keyword>
<keyword id="KW-0812">Transmembrane</keyword>
<keyword id="KW-1133">Transmembrane helix</keyword>
<keyword id="KW-0830">Ubiquinone</keyword>
<protein>
    <recommendedName>
        <fullName evidence="1">NADH-quinone oxidoreductase subunit H 2</fullName>
        <ecNumber evidence="1">7.1.1.-</ecNumber>
    </recommendedName>
    <alternativeName>
        <fullName evidence="1">NADH dehydrogenase I subunit H 2</fullName>
    </alternativeName>
    <alternativeName>
        <fullName evidence="1">NDH-1 subunit H 2</fullName>
    </alternativeName>
</protein>
<name>NUOH2_KORVE</name>